<feature type="chain" id="PRO_0000350354" description="Dual-specificity RNA methyltransferase RlmN">
    <location>
        <begin position="1"/>
        <end position="384"/>
    </location>
</feature>
<feature type="domain" description="Radical SAM core" evidence="2">
    <location>
        <begin position="99"/>
        <end position="339"/>
    </location>
</feature>
<feature type="active site" description="Proton acceptor" evidence="1">
    <location>
        <position position="93"/>
    </location>
</feature>
<feature type="active site" description="S-methylcysteine intermediate" evidence="1">
    <location>
        <position position="344"/>
    </location>
</feature>
<feature type="binding site" evidence="1">
    <location>
        <position position="113"/>
    </location>
    <ligand>
        <name>[4Fe-4S] cluster</name>
        <dbReference type="ChEBI" id="CHEBI:49883"/>
        <note>4Fe-4S-S-AdoMet</note>
    </ligand>
</feature>
<feature type="binding site" evidence="1">
    <location>
        <position position="117"/>
    </location>
    <ligand>
        <name>[4Fe-4S] cluster</name>
        <dbReference type="ChEBI" id="CHEBI:49883"/>
        <note>4Fe-4S-S-AdoMet</note>
    </ligand>
</feature>
<feature type="binding site" evidence="1">
    <location>
        <position position="120"/>
    </location>
    <ligand>
        <name>[4Fe-4S] cluster</name>
        <dbReference type="ChEBI" id="CHEBI:49883"/>
        <note>4Fe-4S-S-AdoMet</note>
    </ligand>
</feature>
<feature type="binding site" evidence="1">
    <location>
        <begin position="170"/>
        <end position="171"/>
    </location>
    <ligand>
        <name>S-adenosyl-L-methionine</name>
        <dbReference type="ChEBI" id="CHEBI:59789"/>
    </ligand>
</feature>
<feature type="binding site" evidence="1">
    <location>
        <position position="202"/>
    </location>
    <ligand>
        <name>S-adenosyl-L-methionine</name>
        <dbReference type="ChEBI" id="CHEBI:59789"/>
    </ligand>
</feature>
<feature type="binding site" evidence="1">
    <location>
        <begin position="224"/>
        <end position="226"/>
    </location>
    <ligand>
        <name>S-adenosyl-L-methionine</name>
        <dbReference type="ChEBI" id="CHEBI:59789"/>
    </ligand>
</feature>
<feature type="binding site" evidence="1">
    <location>
        <position position="301"/>
    </location>
    <ligand>
        <name>S-adenosyl-L-methionine</name>
        <dbReference type="ChEBI" id="CHEBI:59789"/>
    </ligand>
</feature>
<feature type="disulfide bond" description="(transient)" evidence="1">
    <location>
        <begin position="106"/>
        <end position="344"/>
    </location>
</feature>
<name>RLMN_CUPPJ</name>
<protein>
    <recommendedName>
        <fullName evidence="1">Dual-specificity RNA methyltransferase RlmN</fullName>
        <ecNumber evidence="1">2.1.1.192</ecNumber>
    </recommendedName>
    <alternativeName>
        <fullName evidence="1">23S rRNA (adenine(2503)-C(2))-methyltransferase</fullName>
    </alternativeName>
    <alternativeName>
        <fullName evidence="1">23S rRNA m2A2503 methyltransferase</fullName>
    </alternativeName>
    <alternativeName>
        <fullName evidence="1">Ribosomal RNA large subunit methyltransferase N</fullName>
    </alternativeName>
    <alternativeName>
        <fullName evidence="1">tRNA (adenine(37)-C(2))-methyltransferase</fullName>
    </alternativeName>
    <alternativeName>
        <fullName evidence="1">tRNA m2A37 methyltransferase</fullName>
    </alternativeName>
</protein>
<evidence type="ECO:0000255" key="1">
    <source>
        <dbReference type="HAMAP-Rule" id="MF_01849"/>
    </source>
</evidence>
<evidence type="ECO:0000255" key="2">
    <source>
        <dbReference type="PROSITE-ProRule" id="PRU01266"/>
    </source>
</evidence>
<organism>
    <name type="scientific">Cupriavidus pinatubonensis (strain JMP 134 / LMG 1197)</name>
    <name type="common">Cupriavidus necator (strain JMP 134)</name>
    <dbReference type="NCBI Taxonomy" id="264198"/>
    <lineage>
        <taxon>Bacteria</taxon>
        <taxon>Pseudomonadati</taxon>
        <taxon>Pseudomonadota</taxon>
        <taxon>Betaproteobacteria</taxon>
        <taxon>Burkholderiales</taxon>
        <taxon>Burkholderiaceae</taxon>
        <taxon>Cupriavidus</taxon>
    </lineage>
</organism>
<reference key="1">
    <citation type="journal article" date="2010" name="PLoS ONE">
        <title>The complete multipartite genome sequence of Cupriavidus necator JMP134, a versatile pollutant degrader.</title>
        <authorList>
            <person name="Lykidis A."/>
            <person name="Perez-Pantoja D."/>
            <person name="Ledger T."/>
            <person name="Mavromatis K."/>
            <person name="Anderson I.J."/>
            <person name="Ivanova N.N."/>
            <person name="Hooper S.D."/>
            <person name="Lapidus A."/>
            <person name="Lucas S."/>
            <person name="Gonzalez B."/>
            <person name="Kyrpides N.C."/>
        </authorList>
    </citation>
    <scope>NUCLEOTIDE SEQUENCE [LARGE SCALE GENOMIC DNA]</scope>
    <source>
        <strain>JMP134 / LMG 1197</strain>
    </source>
</reference>
<dbReference type="EC" id="2.1.1.192" evidence="1"/>
<dbReference type="EMBL" id="CP000090">
    <property type="protein sequence ID" value="AAZ61453.1"/>
    <property type="molecule type" value="Genomic_DNA"/>
</dbReference>
<dbReference type="SMR" id="Q46ZI0"/>
<dbReference type="STRING" id="264198.Reut_A2089"/>
<dbReference type="KEGG" id="reu:Reut_A2089"/>
<dbReference type="eggNOG" id="COG0820">
    <property type="taxonomic scope" value="Bacteria"/>
</dbReference>
<dbReference type="HOGENOM" id="CLU_029101_0_0_4"/>
<dbReference type="OrthoDB" id="9793973at2"/>
<dbReference type="GO" id="GO:0005737">
    <property type="term" value="C:cytoplasm"/>
    <property type="evidence" value="ECO:0007669"/>
    <property type="project" value="UniProtKB-SubCell"/>
</dbReference>
<dbReference type="GO" id="GO:0051539">
    <property type="term" value="F:4 iron, 4 sulfur cluster binding"/>
    <property type="evidence" value="ECO:0007669"/>
    <property type="project" value="UniProtKB-UniRule"/>
</dbReference>
<dbReference type="GO" id="GO:0046872">
    <property type="term" value="F:metal ion binding"/>
    <property type="evidence" value="ECO:0007669"/>
    <property type="project" value="UniProtKB-KW"/>
</dbReference>
<dbReference type="GO" id="GO:0070040">
    <property type="term" value="F:rRNA (adenine(2503)-C2-)-methyltransferase activity"/>
    <property type="evidence" value="ECO:0007669"/>
    <property type="project" value="UniProtKB-UniRule"/>
</dbReference>
<dbReference type="GO" id="GO:0019843">
    <property type="term" value="F:rRNA binding"/>
    <property type="evidence" value="ECO:0007669"/>
    <property type="project" value="UniProtKB-UniRule"/>
</dbReference>
<dbReference type="GO" id="GO:0002935">
    <property type="term" value="F:tRNA (adenine(37)-C2)-methyltransferase activity"/>
    <property type="evidence" value="ECO:0007669"/>
    <property type="project" value="UniProtKB-UniRule"/>
</dbReference>
<dbReference type="GO" id="GO:0000049">
    <property type="term" value="F:tRNA binding"/>
    <property type="evidence" value="ECO:0007669"/>
    <property type="project" value="UniProtKB-UniRule"/>
</dbReference>
<dbReference type="GO" id="GO:0070475">
    <property type="term" value="P:rRNA base methylation"/>
    <property type="evidence" value="ECO:0007669"/>
    <property type="project" value="UniProtKB-UniRule"/>
</dbReference>
<dbReference type="GO" id="GO:0030488">
    <property type="term" value="P:tRNA methylation"/>
    <property type="evidence" value="ECO:0007669"/>
    <property type="project" value="UniProtKB-UniRule"/>
</dbReference>
<dbReference type="CDD" id="cd01335">
    <property type="entry name" value="Radical_SAM"/>
    <property type="match status" value="1"/>
</dbReference>
<dbReference type="FunFam" id="1.10.150.530:FF:000003">
    <property type="entry name" value="Dual-specificity RNA methyltransferase RlmN"/>
    <property type="match status" value="1"/>
</dbReference>
<dbReference type="FunFam" id="3.20.20.70:FF:000008">
    <property type="entry name" value="Dual-specificity RNA methyltransferase RlmN"/>
    <property type="match status" value="1"/>
</dbReference>
<dbReference type="Gene3D" id="1.10.150.530">
    <property type="match status" value="1"/>
</dbReference>
<dbReference type="Gene3D" id="3.20.20.70">
    <property type="entry name" value="Aldolase class I"/>
    <property type="match status" value="1"/>
</dbReference>
<dbReference type="HAMAP" id="MF_01849">
    <property type="entry name" value="RNA_methyltr_RlmN"/>
    <property type="match status" value="1"/>
</dbReference>
<dbReference type="InterPro" id="IPR013785">
    <property type="entry name" value="Aldolase_TIM"/>
</dbReference>
<dbReference type="InterPro" id="IPR040072">
    <property type="entry name" value="Methyltransferase_A"/>
</dbReference>
<dbReference type="InterPro" id="IPR048641">
    <property type="entry name" value="RlmN_N"/>
</dbReference>
<dbReference type="InterPro" id="IPR027492">
    <property type="entry name" value="RNA_MTrfase_RlmN"/>
</dbReference>
<dbReference type="InterPro" id="IPR004383">
    <property type="entry name" value="rRNA_lsu_MTrfase_RlmN/Cfr"/>
</dbReference>
<dbReference type="InterPro" id="IPR007197">
    <property type="entry name" value="rSAM"/>
</dbReference>
<dbReference type="NCBIfam" id="TIGR00048">
    <property type="entry name" value="rRNA_mod_RlmN"/>
    <property type="match status" value="1"/>
</dbReference>
<dbReference type="PANTHER" id="PTHR30544">
    <property type="entry name" value="23S RRNA METHYLTRANSFERASE"/>
    <property type="match status" value="1"/>
</dbReference>
<dbReference type="PANTHER" id="PTHR30544:SF5">
    <property type="entry name" value="RADICAL SAM CORE DOMAIN-CONTAINING PROTEIN"/>
    <property type="match status" value="1"/>
</dbReference>
<dbReference type="Pfam" id="PF04055">
    <property type="entry name" value="Radical_SAM"/>
    <property type="match status" value="1"/>
</dbReference>
<dbReference type="Pfam" id="PF21016">
    <property type="entry name" value="RlmN_N"/>
    <property type="match status" value="1"/>
</dbReference>
<dbReference type="PIRSF" id="PIRSF006004">
    <property type="entry name" value="CHP00048"/>
    <property type="match status" value="1"/>
</dbReference>
<dbReference type="SFLD" id="SFLDF00275">
    <property type="entry name" value="adenosine_C2_methyltransferase"/>
    <property type="match status" value="1"/>
</dbReference>
<dbReference type="SFLD" id="SFLDS00029">
    <property type="entry name" value="Radical_SAM"/>
    <property type="match status" value="1"/>
</dbReference>
<dbReference type="SUPFAM" id="SSF102114">
    <property type="entry name" value="Radical SAM enzymes"/>
    <property type="match status" value="1"/>
</dbReference>
<dbReference type="PROSITE" id="PS51918">
    <property type="entry name" value="RADICAL_SAM"/>
    <property type="match status" value="1"/>
</dbReference>
<proteinExistence type="inferred from homology"/>
<comment type="function">
    <text evidence="1">Specifically methylates position 2 of adenine 2503 in 23S rRNA and position 2 of adenine 37 in tRNAs. m2A2503 modification seems to play a crucial role in the proofreading step occurring at the peptidyl transferase center and thus would serve to optimize ribosomal fidelity.</text>
</comment>
<comment type="catalytic activity">
    <reaction evidence="1">
        <text>adenosine(2503) in 23S rRNA + 2 reduced [2Fe-2S]-[ferredoxin] + 2 S-adenosyl-L-methionine = 2-methyladenosine(2503) in 23S rRNA + 5'-deoxyadenosine + L-methionine + 2 oxidized [2Fe-2S]-[ferredoxin] + S-adenosyl-L-homocysteine</text>
        <dbReference type="Rhea" id="RHEA:42916"/>
        <dbReference type="Rhea" id="RHEA-COMP:10000"/>
        <dbReference type="Rhea" id="RHEA-COMP:10001"/>
        <dbReference type="Rhea" id="RHEA-COMP:10152"/>
        <dbReference type="Rhea" id="RHEA-COMP:10282"/>
        <dbReference type="ChEBI" id="CHEBI:17319"/>
        <dbReference type="ChEBI" id="CHEBI:33737"/>
        <dbReference type="ChEBI" id="CHEBI:33738"/>
        <dbReference type="ChEBI" id="CHEBI:57844"/>
        <dbReference type="ChEBI" id="CHEBI:57856"/>
        <dbReference type="ChEBI" id="CHEBI:59789"/>
        <dbReference type="ChEBI" id="CHEBI:74411"/>
        <dbReference type="ChEBI" id="CHEBI:74497"/>
        <dbReference type="EC" id="2.1.1.192"/>
    </reaction>
</comment>
<comment type="catalytic activity">
    <reaction evidence="1">
        <text>adenosine(37) in tRNA + 2 reduced [2Fe-2S]-[ferredoxin] + 2 S-adenosyl-L-methionine = 2-methyladenosine(37) in tRNA + 5'-deoxyadenosine + L-methionine + 2 oxidized [2Fe-2S]-[ferredoxin] + S-adenosyl-L-homocysteine</text>
        <dbReference type="Rhea" id="RHEA:43332"/>
        <dbReference type="Rhea" id="RHEA-COMP:10000"/>
        <dbReference type="Rhea" id="RHEA-COMP:10001"/>
        <dbReference type="Rhea" id="RHEA-COMP:10162"/>
        <dbReference type="Rhea" id="RHEA-COMP:10485"/>
        <dbReference type="ChEBI" id="CHEBI:17319"/>
        <dbReference type="ChEBI" id="CHEBI:33737"/>
        <dbReference type="ChEBI" id="CHEBI:33738"/>
        <dbReference type="ChEBI" id="CHEBI:57844"/>
        <dbReference type="ChEBI" id="CHEBI:57856"/>
        <dbReference type="ChEBI" id="CHEBI:59789"/>
        <dbReference type="ChEBI" id="CHEBI:74411"/>
        <dbReference type="ChEBI" id="CHEBI:74497"/>
        <dbReference type="EC" id="2.1.1.192"/>
    </reaction>
</comment>
<comment type="cofactor">
    <cofactor evidence="1">
        <name>[4Fe-4S] cluster</name>
        <dbReference type="ChEBI" id="CHEBI:49883"/>
    </cofactor>
    <text evidence="1">Binds 1 [4Fe-4S] cluster. The cluster is coordinated with 3 cysteines and an exchangeable S-adenosyl-L-methionine.</text>
</comment>
<comment type="subcellular location">
    <subcellularLocation>
        <location evidence="1">Cytoplasm</location>
    </subcellularLocation>
</comment>
<comment type="miscellaneous">
    <text evidence="1">Reaction proceeds by a ping-pong mechanism involving intermediate methylation of a conserved cysteine residue.</text>
</comment>
<comment type="similarity">
    <text evidence="1">Belongs to the radical SAM superfamily. RlmN family.</text>
</comment>
<keyword id="KW-0004">4Fe-4S</keyword>
<keyword id="KW-0963">Cytoplasm</keyword>
<keyword id="KW-1015">Disulfide bond</keyword>
<keyword id="KW-0408">Iron</keyword>
<keyword id="KW-0411">Iron-sulfur</keyword>
<keyword id="KW-0479">Metal-binding</keyword>
<keyword id="KW-0489">Methyltransferase</keyword>
<keyword id="KW-0698">rRNA processing</keyword>
<keyword id="KW-0949">S-adenosyl-L-methionine</keyword>
<keyword id="KW-0808">Transferase</keyword>
<keyword id="KW-0819">tRNA processing</keyword>
<accession>Q46ZI0</accession>
<sequence length="384" mass="42247">MNDLVNLLDLDADALTAYCGELGEKPFRARQLQRWIHQFGASRFDAMSDLAKSLREKLATRAEIRSPAAITDNLSADGTRKWLLDVGNGNAVETVYIPEETRGTLCVSSQAGCAVNCRFCSTGKQGFSRNLTTGEIIGQLWMAEFAMREQLGRGPKDDRVISNVVMMGMGEPLLNYDAVVPAMRLMLDDNAYGLSRRRVTLSTSGVVPMMDRLSKDLPVALAVSLHASNDALRDVLVPLNKKYPLAELMAACRRYLEFAPRDFITFEYCMLDGVNDGVEHARELLKLVADVPCKFNLIPFNPFPESGLKRSNNDQIRRFAQVLMDAGIVTTIRKTRGDDIDAACGQLAGEVKDRTRLAERGKFGKITPLVPVAATGQAGEARPA</sequence>
<gene>
    <name evidence="1" type="primary">rlmN</name>
    <name type="ordered locus">Reut_A2089</name>
</gene>